<accession>P51753</accession>
<gene>
    <name evidence="1" type="primary">psbC</name>
</gene>
<reference key="1">
    <citation type="submission" date="1995-11" db="EMBL/GenBank/DDBJ databases">
        <authorList>
            <person name="Nalty M.S."/>
            <person name="Sharp M."/>
            <person name="Mor T."/>
            <person name="Golden S.S."/>
        </authorList>
    </citation>
    <scope>NUCLEOTIDE SEQUENCE [GENOMIC DNA]</scope>
</reference>
<sequence length="458" mass="50270">MVTLSDRFVGSDLKTSGYPWWAGNARLINLSGKLLGAHVAHAGLIVFWAGAMTLFEVAHFTPEKPLYEQGDILLPHLASLGWGVGPGGEITDITPYFIVGVLHLISSAVLGLGGVYHTLRGPETLEQYSDFFSQDWKDKNQMTNILGFHLIVLGIGASLFVFKAMFFGGLYDPWVPGGGGVRVITNPTLSPSVLFGYLFRSPFGGEGWLIGVNNMEDVVGGHIWVALHCFIGGAWHLITRPFNWARRSLVWSGEAYLSYSLGALSLMGFIASMFVWFNNTVYPSEFYGPTGSEASQAQSFTFLIRDQRLGANIASAQGPTGLGKYLMRSPTGEVIFGGETMRFWDFRGPWLEPLRGPNGLDLDKLNNDVQPWQIRRAAEYMTHAPLASINSVGGVITEPNSVNYVNLRQWLAGSHFILGFFFLIGHLWHAGRARAAAAGFEKGIDRKTEPVLSMSDLD</sequence>
<comment type="function">
    <text evidence="1">One of the components of the core complex of photosystem II (PSII). It binds chlorophyll and helps catalyze the primary light-induced photochemical processes of PSII. PSII is a light-driven water:plastoquinone oxidoreductase, using light energy to abstract electrons from H(2)O, generating O(2) and a proton gradient subsequently used for ATP formation.</text>
</comment>
<comment type="cofactor">
    <text evidence="1">Binds multiple chlorophylls and provides some of the ligands for the Ca-4Mn-5O cluster of the oxygen-evolving complex. It may also provide a ligand for a Cl- that is required for oxygen evolution. PSII binds additional chlorophylls, carotenoids and specific lipids.</text>
</comment>
<comment type="subunit">
    <text evidence="1">PSII is composed of 1 copy each of membrane proteins PsbA, PsbB, PsbC, PsbD, PsbE, PsbF, PsbH, PsbI, PsbJ, PsbK, PsbL, PsbM, PsbT, PsbX, PsbY, PsbZ, Psb30/Ycf12, peripheral proteins PsbO, CyanoQ (PsbQ), PsbU, PsbV and a large number of cofactors. It forms dimeric complexes.</text>
</comment>
<comment type="subcellular location">
    <subcellularLocation>
        <location evidence="1">Cellular thylakoid membrane</location>
        <topology evidence="1">Multi-pass membrane protein</topology>
    </subcellularLocation>
</comment>
<comment type="similarity">
    <text evidence="1">Belongs to the PsbB/PsbC family. PsbC subfamily.</text>
</comment>
<keyword id="KW-0148">Chlorophyll</keyword>
<keyword id="KW-0157">Chromophore</keyword>
<keyword id="KW-0464">Manganese</keyword>
<keyword id="KW-0472">Membrane</keyword>
<keyword id="KW-0479">Metal-binding</keyword>
<keyword id="KW-0602">Photosynthesis</keyword>
<keyword id="KW-0604">Photosystem II</keyword>
<keyword id="KW-0793">Thylakoid</keyword>
<keyword id="KW-0812">Transmembrane</keyword>
<keyword id="KW-1133">Transmembrane helix</keyword>
<feature type="chain" id="PRO_0000077530" description="Photosystem II CP43 reaction center protein">
    <location>
        <begin position="1"/>
        <end position="458"/>
    </location>
</feature>
<feature type="transmembrane region" description="Helical" evidence="1">
    <location>
        <begin position="54"/>
        <end position="78"/>
    </location>
</feature>
<feature type="transmembrane region" description="Helical" evidence="1">
    <location>
        <begin position="119"/>
        <end position="140"/>
    </location>
</feature>
<feature type="transmembrane region" description="Helical" evidence="1">
    <location>
        <begin position="163"/>
        <end position="185"/>
    </location>
</feature>
<feature type="transmembrane region" description="Helical" evidence="1">
    <location>
        <begin position="240"/>
        <end position="260"/>
    </location>
</feature>
<feature type="transmembrane region" description="Helical" evidence="1">
    <location>
        <begin position="276"/>
        <end position="297"/>
    </location>
</feature>
<feature type="transmembrane region" description="Helical" evidence="1">
    <location>
        <begin position="432"/>
        <end position="456"/>
    </location>
</feature>
<feature type="binding site" evidence="1">
    <location>
        <position position="352"/>
    </location>
    <ligand>
        <name>[CaMn4O5] cluster</name>
        <dbReference type="ChEBI" id="CHEBI:189552"/>
    </ligand>
</feature>
<evidence type="ECO:0000255" key="1">
    <source>
        <dbReference type="HAMAP-Rule" id="MF_01496"/>
    </source>
</evidence>
<proteinExistence type="inferred from homology"/>
<name>PSBC_PROHO</name>
<dbReference type="EMBL" id="U40144">
    <property type="protein sequence ID" value="AAA82945.1"/>
    <property type="molecule type" value="Genomic_DNA"/>
</dbReference>
<dbReference type="RefSeq" id="WP_026099561.1">
    <property type="nucleotide sequence ID" value="NZ_JBEIME010000570.1"/>
</dbReference>
<dbReference type="SMR" id="P51753"/>
<dbReference type="GO" id="GO:0009523">
    <property type="term" value="C:photosystem II"/>
    <property type="evidence" value="ECO:0007669"/>
    <property type="project" value="UniProtKB-KW"/>
</dbReference>
<dbReference type="GO" id="GO:0031676">
    <property type="term" value="C:plasma membrane-derived thylakoid membrane"/>
    <property type="evidence" value="ECO:0007669"/>
    <property type="project" value="UniProtKB-SubCell"/>
</dbReference>
<dbReference type="GO" id="GO:0016168">
    <property type="term" value="F:chlorophyll binding"/>
    <property type="evidence" value="ECO:0007669"/>
    <property type="project" value="UniProtKB-UniRule"/>
</dbReference>
<dbReference type="GO" id="GO:0045156">
    <property type="term" value="F:electron transporter, transferring electrons within the cyclic electron transport pathway of photosynthesis activity"/>
    <property type="evidence" value="ECO:0007669"/>
    <property type="project" value="InterPro"/>
</dbReference>
<dbReference type="GO" id="GO:0046872">
    <property type="term" value="F:metal ion binding"/>
    <property type="evidence" value="ECO:0007669"/>
    <property type="project" value="UniProtKB-KW"/>
</dbReference>
<dbReference type="GO" id="GO:0009772">
    <property type="term" value="P:photosynthetic electron transport in photosystem II"/>
    <property type="evidence" value="ECO:0007669"/>
    <property type="project" value="InterPro"/>
</dbReference>
<dbReference type="FunFam" id="1.10.10.670:FF:000001">
    <property type="entry name" value="Photosystem II CP43 reaction center protein"/>
    <property type="match status" value="1"/>
</dbReference>
<dbReference type="Gene3D" id="1.10.10.670">
    <property type="entry name" value="photosystem ii from thermosynechococcus elongatus"/>
    <property type="match status" value="1"/>
</dbReference>
<dbReference type="HAMAP" id="MF_01496">
    <property type="entry name" value="PSII_PsbC_CP43"/>
    <property type="match status" value="1"/>
</dbReference>
<dbReference type="InterPro" id="IPR000932">
    <property type="entry name" value="PS_antenna-like"/>
</dbReference>
<dbReference type="InterPro" id="IPR036001">
    <property type="entry name" value="PS_II_antenna-like_sf"/>
</dbReference>
<dbReference type="InterPro" id="IPR005869">
    <property type="entry name" value="PSII_PsbC"/>
</dbReference>
<dbReference type="InterPro" id="IPR044900">
    <property type="entry name" value="PSII_PsbC_sf"/>
</dbReference>
<dbReference type="NCBIfam" id="TIGR01153">
    <property type="entry name" value="psbC"/>
    <property type="match status" value="1"/>
</dbReference>
<dbReference type="Pfam" id="PF00421">
    <property type="entry name" value="PSII"/>
    <property type="match status" value="1"/>
</dbReference>
<dbReference type="SUPFAM" id="SSF161077">
    <property type="entry name" value="Photosystem II antenna protein-like"/>
    <property type="match status" value="1"/>
</dbReference>
<protein>
    <recommendedName>
        <fullName evidence="1">Photosystem II CP43 reaction center protein</fullName>
    </recommendedName>
    <alternativeName>
        <fullName evidence="1">PSII 43 kDa protein</fullName>
    </alternativeName>
    <alternativeName>
        <fullName evidence="1">Protein CP-43</fullName>
    </alternativeName>
</protein>
<organism>
    <name type="scientific">Prochlorothrix hollandica</name>
    <dbReference type="NCBI Taxonomy" id="1223"/>
    <lineage>
        <taxon>Bacteria</taxon>
        <taxon>Bacillati</taxon>
        <taxon>Cyanobacteriota</taxon>
        <taxon>Cyanophyceae</taxon>
        <taxon>Prochlorotrichales</taxon>
        <taxon>Prochlorotrichaceae</taxon>
        <taxon>Prochlorothrix</taxon>
    </lineage>
</organism>